<proteinExistence type="inferred from homology"/>
<gene>
    <name type="primary">isdB</name>
    <name type="synonym">frpB</name>
    <name type="synonym">sasJ</name>
    <name type="synonym">sirH</name>
    <name type="ordered locus">SaurJH1_1210</name>
</gene>
<protein>
    <recommendedName>
        <fullName>Iron-regulated surface determinant protein B</fullName>
    </recommendedName>
    <alternativeName>
        <fullName>Fur-regulated protein B</fullName>
    </alternativeName>
    <alternativeName>
        <fullName>Staphylococcal iron-regulated protein H</fullName>
    </alternativeName>
    <alternativeName>
        <fullName>Staphylococcus aureus surface protein J</fullName>
    </alternativeName>
</protein>
<evidence type="ECO:0000250" key="1"/>
<evidence type="ECO:0000250" key="2">
    <source>
        <dbReference type="UniProtKB" id="A6QG30"/>
    </source>
</evidence>
<evidence type="ECO:0000250" key="3">
    <source>
        <dbReference type="UniProtKB" id="Q2FZF0"/>
    </source>
</evidence>
<evidence type="ECO:0000250" key="4">
    <source>
        <dbReference type="UniProtKB" id="Q7A656"/>
    </source>
</evidence>
<evidence type="ECO:0000255" key="5"/>
<evidence type="ECO:0000255" key="6">
    <source>
        <dbReference type="PROSITE-ProRule" id="PRU00337"/>
    </source>
</evidence>
<evidence type="ECO:0000255" key="7">
    <source>
        <dbReference type="PROSITE-ProRule" id="PRU00477"/>
    </source>
</evidence>
<evidence type="ECO:0000256" key="8">
    <source>
        <dbReference type="SAM" id="MobiDB-lite"/>
    </source>
</evidence>
<evidence type="ECO:0000305" key="9"/>
<keyword id="KW-0134">Cell wall</keyword>
<keyword id="KW-0349">Heme</keyword>
<keyword id="KW-0408">Iron</keyword>
<keyword id="KW-0479">Metal-binding</keyword>
<keyword id="KW-0572">Peptidoglycan-anchor</keyword>
<keyword id="KW-0677">Repeat</keyword>
<keyword id="KW-0964">Secreted</keyword>
<keyword id="KW-0732">Signal</keyword>
<keyword id="KW-0843">Virulence</keyword>
<sequence>MNKQQKEFKSFYSIRKSSLGVASVAISTLLLLMSNGEAQAAAEETGGTNTEAQPKTEAVASPTTTSEKAPETKPVANAVSVSNKEVEAPTSETKEAKEVKEVKAPKETKAVKPAAKATNNTYPILNQELREAIKNPAIKDKDHSAPNSRPIDFEMKKENGEQQFYHYASSVKPARVIFTDSKPEIELGLQSGQFWRKFEVYEGDKKLPIKLVSYDTVKDYAYIRFSVSNGTKAVKIVSSTHFNNKEEKYDYTLMEFAQPIYNSADKFKTEEDYKAEKLLAPYKKAKTLERQVYELNKIQDKLPEKLKAEYKKKLEDTKKALDEQVKSAITEFQNVQPTNEKMTDLQDTKYVVYESVENNESMMDTFVKHPIKTGMLNGKKYMVMETTNDDYWKDFMVEGQRVRTISKDAKNNTRTIIFPYVEGKTLYDAIVKVHVKTIDYDGQYHVRIVDKEAFTKANTDKSNKKEQQDNSAKKEATPATPSKPTPSPVEKESQKQDSQKDDNKQLPSVEKENDASSESGKDKTPATKPTKGEVESSSTTPTKVVSTTQNVAKPTTASSKTTKDVVQTSAGSSEAKDSAPLQKANIKNTNDGHTQSQNNKNTQENKAKSLPQTGEESNKDMTLPLMALLALSSIVAFVLPRKRKN</sequence>
<comment type="function">
    <text evidence="2">Cell wall-anchored surface receptor that extracts heme from oxidized metHb to enable growth on hemoglobin as a sole iron source. Rapidly extracts heme from hemoglobin and transfers it to IsdA or IsdC, which then relays it to the membrane transporter/IsdEF for internalization. Also promotes resistance to hydrogen peroxide and killing by neutrophils.</text>
</comment>
<comment type="subunit">
    <text evidence="2">Interacts with host HBA; this interaction allows heme extraction as iron source. Interacts with IsdA.</text>
</comment>
<comment type="subcellular location">
    <subcellularLocation>
        <location evidence="2">Secreted</location>
        <location evidence="2">Cell wall</location>
        <topology evidence="2">Peptidoglycan-anchor</topology>
    </subcellularLocation>
    <text evidence="2">Anchored to the cell wall by sortase A.</text>
</comment>
<comment type="induction">
    <text evidence="1">Repressed by fur in the presence of iron.</text>
</comment>
<comment type="similarity">
    <text evidence="9">Belongs to the IsdB family.</text>
</comment>
<reference key="1">
    <citation type="submission" date="2007-06" db="EMBL/GenBank/DDBJ databases">
        <title>Complete sequence of chromosome of Staphylococcus aureus subsp. aureus JH1.</title>
        <authorList>
            <consortium name="US DOE Joint Genome Institute"/>
            <person name="Copeland A."/>
            <person name="Lucas S."/>
            <person name="Lapidus A."/>
            <person name="Barry K."/>
            <person name="Detter J.C."/>
            <person name="Glavina del Rio T."/>
            <person name="Hammon N."/>
            <person name="Israni S."/>
            <person name="Dalin E."/>
            <person name="Tice H."/>
            <person name="Pitluck S."/>
            <person name="Chain P."/>
            <person name="Malfatti S."/>
            <person name="Shin M."/>
            <person name="Vergez L."/>
            <person name="Schmutz J."/>
            <person name="Larimer F."/>
            <person name="Land M."/>
            <person name="Hauser L."/>
            <person name="Kyrpides N."/>
            <person name="Ivanova N."/>
            <person name="Tomasz A."/>
            <person name="Richardson P."/>
        </authorList>
    </citation>
    <scope>NUCLEOTIDE SEQUENCE [LARGE SCALE GENOMIC DNA]</scope>
    <source>
        <strain>JH1</strain>
    </source>
</reference>
<dbReference type="EMBL" id="CP000736">
    <property type="protein sequence ID" value="ABR52064.1"/>
    <property type="molecule type" value="Genomic_DNA"/>
</dbReference>
<dbReference type="BMRB" id="A6U0U6"/>
<dbReference type="SMR" id="A6U0U6"/>
<dbReference type="KEGG" id="sah:SaurJH1_1210"/>
<dbReference type="HOGENOM" id="CLU_016167_0_0_9"/>
<dbReference type="PRO" id="PR:A6U0U6"/>
<dbReference type="GO" id="GO:0005576">
    <property type="term" value="C:extracellular region"/>
    <property type="evidence" value="ECO:0007669"/>
    <property type="project" value="UniProtKB-KW"/>
</dbReference>
<dbReference type="GO" id="GO:0015232">
    <property type="term" value="F:heme transmembrane transporter activity"/>
    <property type="evidence" value="ECO:0007669"/>
    <property type="project" value="InterPro"/>
</dbReference>
<dbReference type="GO" id="GO:0046872">
    <property type="term" value="F:metal ion binding"/>
    <property type="evidence" value="ECO:0007669"/>
    <property type="project" value="UniProtKB-KW"/>
</dbReference>
<dbReference type="CDD" id="cd06920">
    <property type="entry name" value="NEAT"/>
    <property type="match status" value="1"/>
</dbReference>
<dbReference type="Gene3D" id="1.20.58.1270">
    <property type="match status" value="1"/>
</dbReference>
<dbReference type="Gene3D" id="2.60.40.1850">
    <property type="match status" value="2"/>
</dbReference>
<dbReference type="InterPro" id="IPR019929">
    <property type="entry name" value="Iron-reg_IsdB"/>
</dbReference>
<dbReference type="InterPro" id="IPR048652">
    <property type="entry name" value="Isd_H_B_linker"/>
</dbReference>
<dbReference type="InterPro" id="IPR050436">
    <property type="entry name" value="IsdA"/>
</dbReference>
<dbReference type="InterPro" id="IPR019931">
    <property type="entry name" value="LPXTG_anchor"/>
</dbReference>
<dbReference type="InterPro" id="IPR006635">
    <property type="entry name" value="NEAT_dom"/>
</dbReference>
<dbReference type="InterPro" id="IPR037250">
    <property type="entry name" value="NEAT_dom_sf"/>
</dbReference>
<dbReference type="InterPro" id="IPR005877">
    <property type="entry name" value="YSIRK_signal_dom"/>
</dbReference>
<dbReference type="NCBIfam" id="TIGR03657">
    <property type="entry name" value="IsdB"/>
    <property type="match status" value="1"/>
</dbReference>
<dbReference type="NCBIfam" id="TIGR01167">
    <property type="entry name" value="LPXTG_anchor"/>
    <property type="match status" value="1"/>
</dbReference>
<dbReference type="NCBIfam" id="TIGR01168">
    <property type="entry name" value="YSIRK_signal"/>
    <property type="match status" value="1"/>
</dbReference>
<dbReference type="PANTHER" id="PTHR37824">
    <property type="entry name" value="IRON-REGULATED SURFACE DETERMINANT PROTEIN C"/>
    <property type="match status" value="1"/>
</dbReference>
<dbReference type="PANTHER" id="PTHR37824:SF1">
    <property type="entry name" value="IRON-REGULATED SURFACE DETERMINANT PROTEIN C"/>
    <property type="match status" value="1"/>
</dbReference>
<dbReference type="Pfam" id="PF00746">
    <property type="entry name" value="Gram_pos_anchor"/>
    <property type="match status" value="1"/>
</dbReference>
<dbReference type="Pfam" id="PF20861">
    <property type="entry name" value="Isd_H_B_linker"/>
    <property type="match status" value="1"/>
</dbReference>
<dbReference type="Pfam" id="PF05031">
    <property type="entry name" value="NEAT"/>
    <property type="match status" value="2"/>
</dbReference>
<dbReference type="Pfam" id="PF04650">
    <property type="entry name" value="YSIRK_signal"/>
    <property type="match status" value="1"/>
</dbReference>
<dbReference type="SMART" id="SM00725">
    <property type="entry name" value="NEAT"/>
    <property type="match status" value="2"/>
</dbReference>
<dbReference type="SUPFAM" id="SSF158911">
    <property type="entry name" value="NEAT domain-like"/>
    <property type="match status" value="2"/>
</dbReference>
<dbReference type="PROSITE" id="PS50847">
    <property type="entry name" value="GRAM_POS_ANCHORING"/>
    <property type="match status" value="1"/>
</dbReference>
<dbReference type="PROSITE" id="PS50978">
    <property type="entry name" value="NEAT"/>
    <property type="match status" value="2"/>
</dbReference>
<accession>A6U0U6</accession>
<feature type="signal peptide" evidence="5">
    <location>
        <begin position="1"/>
        <end position="40"/>
    </location>
</feature>
<feature type="chain" id="PRO_5000256991" description="Iron-regulated surface determinant protein B">
    <location>
        <begin position="41"/>
        <end position="613"/>
    </location>
</feature>
<feature type="propeptide" id="PRO_0000333244" description="Removed by sortase" evidence="7">
    <location>
        <begin position="614"/>
        <end position="645"/>
    </location>
</feature>
<feature type="domain" description="NEAT 1" evidence="6">
    <location>
        <begin position="144"/>
        <end position="269"/>
    </location>
</feature>
<feature type="domain" description="NEAT 2" evidence="6">
    <location>
        <begin position="341"/>
        <end position="458"/>
    </location>
</feature>
<feature type="region of interest" description="Disordered" evidence="8">
    <location>
        <begin position="38"/>
        <end position="113"/>
    </location>
</feature>
<feature type="region of interest" description="Disordered" evidence="8">
    <location>
        <begin position="458"/>
        <end position="619"/>
    </location>
</feature>
<feature type="short sequence motif" description="YSIRK-G/S signaling motif" evidence="3">
    <location>
        <begin position="12"/>
        <end position="23"/>
    </location>
</feature>
<feature type="short sequence motif" description="LPXTG sorting signal" evidence="7">
    <location>
        <begin position="610"/>
        <end position="614"/>
    </location>
</feature>
<feature type="compositionally biased region" description="Low complexity" evidence="8">
    <location>
        <begin position="38"/>
        <end position="53"/>
    </location>
</feature>
<feature type="compositionally biased region" description="Basic and acidic residues" evidence="8">
    <location>
        <begin position="84"/>
        <end position="110"/>
    </location>
</feature>
<feature type="compositionally biased region" description="Basic and acidic residues" evidence="8">
    <location>
        <begin position="458"/>
        <end position="476"/>
    </location>
</feature>
<feature type="compositionally biased region" description="Basic and acidic residues" evidence="8">
    <location>
        <begin position="489"/>
        <end position="534"/>
    </location>
</feature>
<feature type="compositionally biased region" description="Low complexity" evidence="8">
    <location>
        <begin position="535"/>
        <end position="560"/>
    </location>
</feature>
<feature type="compositionally biased region" description="Polar residues" evidence="8">
    <location>
        <begin position="585"/>
        <end position="615"/>
    </location>
</feature>
<feature type="binding site" description="axial binding residue" evidence="4">
    <location>
        <position position="362"/>
    </location>
    <ligand>
        <name>heme</name>
        <dbReference type="ChEBI" id="CHEBI:30413"/>
    </ligand>
    <ligandPart>
        <name>Fe</name>
        <dbReference type="ChEBI" id="CHEBI:18248"/>
    </ligandPart>
</feature>
<feature type="binding site" description="axial binding residue" evidence="4">
    <location>
        <position position="440"/>
    </location>
    <ligand>
        <name>heme</name>
        <dbReference type="ChEBI" id="CHEBI:30413"/>
    </ligand>
    <ligandPart>
        <name>Fe</name>
        <dbReference type="ChEBI" id="CHEBI:18248"/>
    </ligandPart>
</feature>
<feature type="modified residue" description="Pentaglycyl murein peptidoglycan amidated threonine" evidence="7">
    <location>
        <position position="613"/>
    </location>
</feature>
<name>ISDB_STAA2</name>
<organism>
    <name type="scientific">Staphylococcus aureus (strain JH1)</name>
    <dbReference type="NCBI Taxonomy" id="359787"/>
    <lineage>
        <taxon>Bacteria</taxon>
        <taxon>Bacillati</taxon>
        <taxon>Bacillota</taxon>
        <taxon>Bacilli</taxon>
        <taxon>Bacillales</taxon>
        <taxon>Staphylococcaceae</taxon>
        <taxon>Staphylococcus</taxon>
    </lineage>
</organism>